<accession>P45017</accession>
<organism>
    <name type="scientific">Haemophilus influenzae (strain ATCC 51907 / DSM 11121 / KW20 / Rd)</name>
    <dbReference type="NCBI Taxonomy" id="71421"/>
    <lineage>
        <taxon>Bacteria</taxon>
        <taxon>Pseudomonadati</taxon>
        <taxon>Pseudomonadota</taxon>
        <taxon>Gammaproteobacteria</taxon>
        <taxon>Pasteurellales</taxon>
        <taxon>Pasteurellaceae</taxon>
        <taxon>Haemophilus</taxon>
    </lineage>
</organism>
<protein>
    <recommendedName>
        <fullName evidence="1">Cytochrome c-552</fullName>
        <ecNumber evidence="1">1.7.2.2</ecNumber>
    </recommendedName>
    <alternativeName>
        <fullName evidence="1">Ammonia-forming cytochrome c nitrite reductase</fullName>
        <shortName evidence="1">Cytochrome c nitrite reductase</shortName>
    </alternativeName>
</protein>
<sequence length="538" mass="60400">MKIYLRFVWILIIILNFLLNLFITTNGVIIVNAFKKSLIVAASFASLSLFNSATAELVYKPLEQPVEPAKPDLKIESVNEKFAEKYPNQYNSWRSTANGDGENIIYADEENPRLIVLWGGYAFAKEYNAPRGHFYAVTDVRNILRTGAPKTANDGPQAMACWTCKGPDVPRLIAEWGEKDYFNAKWAKGGPEIVNSIGCADCHDTTSKDFAEGKPALRIARPHVLRALDALEKATAEKDKAEGRPHNNLSFNTAARTEKRAEICANCHVEYYFAGDIKQVTFPWDNGQTVDDIEKYYDDIGFTDWTHSLSKAPMLKAQHPDFEIWSLGMHGKNGVTCVDCHMPKVQGADGKVYTDHQIQNPFEAFDSTCANCHDQSKEKLRDIVTSRKKEVKDVMGRLEDQVVKAHFEAKEAWDAGATKKEMEAALMDIRHAQWRWDYTAASHGGHMHAPEVVLRVLASGLDKVADARTKLAVILTKHGVKTPVQIPDISTADKAWKVMGIDIEKERKAKEEFLKTVVPQWEQQAREKGLLVDPPAQK</sequence>
<dbReference type="EC" id="1.7.2.2" evidence="1"/>
<dbReference type="EMBL" id="L42023">
    <property type="protein sequence ID" value="AAC22727.1"/>
    <property type="molecule type" value="Genomic_DNA"/>
</dbReference>
<dbReference type="PIR" id="C64181">
    <property type="entry name" value="C64181"/>
</dbReference>
<dbReference type="RefSeq" id="NP_439227.3">
    <property type="nucleotide sequence ID" value="NC_000907.1"/>
</dbReference>
<dbReference type="SMR" id="P45017"/>
<dbReference type="STRING" id="71421.HI_1069"/>
<dbReference type="EnsemblBacteria" id="AAC22727">
    <property type="protein sequence ID" value="AAC22727"/>
    <property type="gene ID" value="HI_1069"/>
</dbReference>
<dbReference type="KEGG" id="hin:HI_1069"/>
<dbReference type="PATRIC" id="fig|71421.8.peg.1113"/>
<dbReference type="eggNOG" id="COG3303">
    <property type="taxonomic scope" value="Bacteria"/>
</dbReference>
<dbReference type="HOGENOM" id="CLU_035040_1_0_6"/>
<dbReference type="OrthoDB" id="9780421at2"/>
<dbReference type="PhylomeDB" id="P45017"/>
<dbReference type="BioCyc" id="HINF71421:G1GJ1-1105-MONOMER"/>
<dbReference type="UniPathway" id="UPA00653"/>
<dbReference type="Proteomes" id="UP000000579">
    <property type="component" value="Chromosome"/>
</dbReference>
<dbReference type="GO" id="GO:0030288">
    <property type="term" value="C:outer membrane-bounded periplasmic space"/>
    <property type="evidence" value="ECO:0000318"/>
    <property type="project" value="GO_Central"/>
</dbReference>
<dbReference type="GO" id="GO:0005509">
    <property type="term" value="F:calcium ion binding"/>
    <property type="evidence" value="ECO:0007669"/>
    <property type="project" value="UniProtKB-UniRule"/>
</dbReference>
<dbReference type="GO" id="GO:0020037">
    <property type="term" value="F:heme binding"/>
    <property type="evidence" value="ECO:0000318"/>
    <property type="project" value="GO_Central"/>
</dbReference>
<dbReference type="GO" id="GO:0005506">
    <property type="term" value="F:iron ion binding"/>
    <property type="evidence" value="ECO:0007669"/>
    <property type="project" value="UniProtKB-UniRule"/>
</dbReference>
<dbReference type="GO" id="GO:0042279">
    <property type="term" value="F:nitrite reductase (cytochrome, ammonia-forming) activity"/>
    <property type="evidence" value="ECO:0000318"/>
    <property type="project" value="GO_Central"/>
</dbReference>
<dbReference type="GO" id="GO:0019645">
    <property type="term" value="P:anaerobic electron transport chain"/>
    <property type="evidence" value="ECO:0000318"/>
    <property type="project" value="GO_Central"/>
</dbReference>
<dbReference type="GO" id="GO:0042128">
    <property type="term" value="P:nitrate assimilation"/>
    <property type="evidence" value="ECO:0007669"/>
    <property type="project" value="UniProtKB-UniRule"/>
</dbReference>
<dbReference type="CDD" id="cd00548">
    <property type="entry name" value="NrfA-like"/>
    <property type="match status" value="1"/>
</dbReference>
<dbReference type="FunFam" id="1.10.1130.10:FF:000002">
    <property type="entry name" value="Cytochrome c-552"/>
    <property type="match status" value="1"/>
</dbReference>
<dbReference type="FunFam" id="1.20.140.10:FF:000014">
    <property type="entry name" value="Cytochrome c-552"/>
    <property type="match status" value="1"/>
</dbReference>
<dbReference type="Gene3D" id="1.20.140.10">
    <property type="entry name" value="Butyryl-CoA Dehydrogenase, subunit A, domain 3"/>
    <property type="match status" value="1"/>
</dbReference>
<dbReference type="Gene3D" id="1.10.1130.10">
    <property type="entry name" value="Flavocytochrome C3, Chain A"/>
    <property type="match status" value="1"/>
</dbReference>
<dbReference type="HAMAP" id="MF_01182">
    <property type="entry name" value="Cytochrom_C552"/>
    <property type="match status" value="1"/>
</dbReference>
<dbReference type="InterPro" id="IPR003321">
    <property type="entry name" value="Cyt_c552"/>
</dbReference>
<dbReference type="InterPro" id="IPR017570">
    <property type="entry name" value="Cyt_c_NO2Rdtase_formate-dep"/>
</dbReference>
<dbReference type="InterPro" id="IPR036280">
    <property type="entry name" value="Multihaem_cyt_sf"/>
</dbReference>
<dbReference type="NCBIfam" id="TIGR03152">
    <property type="entry name" value="cyto_c552_HCOOH"/>
    <property type="match status" value="1"/>
</dbReference>
<dbReference type="NCBIfam" id="NF008339">
    <property type="entry name" value="PRK11125.1"/>
    <property type="match status" value="1"/>
</dbReference>
<dbReference type="PANTHER" id="PTHR30633:SF0">
    <property type="entry name" value="CYTOCHROME C-552"/>
    <property type="match status" value="1"/>
</dbReference>
<dbReference type="PANTHER" id="PTHR30633">
    <property type="entry name" value="CYTOCHROME C-552 RESPIRATORY NITRITE REDUCTASE"/>
    <property type="match status" value="1"/>
</dbReference>
<dbReference type="Pfam" id="PF02335">
    <property type="entry name" value="Cytochrom_C552"/>
    <property type="match status" value="1"/>
</dbReference>
<dbReference type="PIRSF" id="PIRSF000243">
    <property type="entry name" value="Cyt_c552"/>
    <property type="match status" value="1"/>
</dbReference>
<dbReference type="SUPFAM" id="SSF48695">
    <property type="entry name" value="Multiheme cytochromes"/>
    <property type="match status" value="1"/>
</dbReference>
<dbReference type="PROSITE" id="PS51008">
    <property type="entry name" value="MULTIHEME_CYTC"/>
    <property type="match status" value="1"/>
</dbReference>
<reference key="1">
    <citation type="journal article" date="1995" name="Science">
        <title>Whole-genome random sequencing and assembly of Haemophilus influenzae Rd.</title>
        <authorList>
            <person name="Fleischmann R.D."/>
            <person name="Adams M.D."/>
            <person name="White O."/>
            <person name="Clayton R.A."/>
            <person name="Kirkness E.F."/>
            <person name="Kerlavage A.R."/>
            <person name="Bult C.J."/>
            <person name="Tomb J.-F."/>
            <person name="Dougherty B.A."/>
            <person name="Merrick J.M."/>
            <person name="McKenney K."/>
            <person name="Sutton G.G."/>
            <person name="FitzHugh W."/>
            <person name="Fields C.A."/>
            <person name="Gocayne J.D."/>
            <person name="Scott J.D."/>
            <person name="Shirley R."/>
            <person name="Liu L.-I."/>
            <person name="Glodek A."/>
            <person name="Kelley J.M."/>
            <person name="Weidman J.F."/>
            <person name="Phillips C.A."/>
            <person name="Spriggs T."/>
            <person name="Hedblom E."/>
            <person name="Cotton M.D."/>
            <person name="Utterback T.R."/>
            <person name="Hanna M.C."/>
            <person name="Nguyen D.T."/>
            <person name="Saudek D.M."/>
            <person name="Brandon R.C."/>
            <person name="Fine L.D."/>
            <person name="Fritchman J.L."/>
            <person name="Fuhrmann J.L."/>
            <person name="Geoghagen N.S.M."/>
            <person name="Gnehm C.L."/>
            <person name="McDonald L.A."/>
            <person name="Small K.V."/>
            <person name="Fraser C.M."/>
            <person name="Smith H.O."/>
            <person name="Venter J.C."/>
        </authorList>
    </citation>
    <scope>NUCLEOTIDE SEQUENCE [LARGE SCALE GENOMIC DNA]</scope>
    <source>
        <strain>ATCC 51907 / DSM 11121 / KW20 / Rd</strain>
    </source>
</reference>
<name>NRFA_HAEIN</name>
<gene>
    <name evidence="1" type="primary">nrfA</name>
    <name type="ordered locus">HI_1069</name>
</gene>
<proteinExistence type="inferred from homology"/>
<evidence type="ECO:0000255" key="1">
    <source>
        <dbReference type="HAMAP-Rule" id="MF_01182"/>
    </source>
</evidence>
<feature type="signal peptide" evidence="1">
    <location>
        <begin position="1"/>
        <end position="55"/>
    </location>
</feature>
<feature type="chain" id="PRO_0000006579" description="Cytochrome c-552">
    <location>
        <begin position="56"/>
        <end position="538"/>
    </location>
</feature>
<feature type="binding site" description="axial binding residue" evidence="1">
    <location>
        <position position="133"/>
    </location>
    <ligand>
        <name>heme c</name>
        <dbReference type="ChEBI" id="CHEBI:61717"/>
        <label>3</label>
    </ligand>
    <ligandPart>
        <name>Fe</name>
        <dbReference type="ChEBI" id="CHEBI:18248"/>
    </ligandPart>
</feature>
<feature type="binding site" description="covalent" evidence="1">
    <location>
        <position position="161"/>
    </location>
    <ligand>
        <name>heme</name>
        <dbReference type="ChEBI" id="CHEBI:30413"/>
        <label>1</label>
    </ligand>
</feature>
<feature type="binding site" description="covalent" evidence="1">
    <location>
        <position position="164"/>
    </location>
    <ligand>
        <name>heme</name>
        <dbReference type="ChEBI" id="CHEBI:30413"/>
        <label>1</label>
    </ligand>
</feature>
<feature type="binding site" description="axial binding residue" evidence="1">
    <location>
        <position position="165"/>
    </location>
    <ligand>
        <name>heme</name>
        <dbReference type="ChEBI" id="CHEBI:30413"/>
        <label>1</label>
    </ligand>
    <ligandPart>
        <name>Fe</name>
        <dbReference type="ChEBI" id="CHEBI:18248"/>
    </ligandPart>
</feature>
<feature type="binding site" description="covalent" evidence="1">
    <location>
        <position position="199"/>
    </location>
    <ligand>
        <name>heme c</name>
        <dbReference type="ChEBI" id="CHEBI:61717"/>
        <label>2</label>
    </ligand>
</feature>
<feature type="binding site" description="covalent" evidence="1">
    <location>
        <position position="202"/>
    </location>
    <ligand>
        <name>heme c</name>
        <dbReference type="ChEBI" id="CHEBI:61717"/>
        <label>2</label>
    </ligand>
</feature>
<feature type="binding site" description="axial binding residue" evidence="1">
    <location>
        <position position="203"/>
    </location>
    <ligand>
        <name>heme c</name>
        <dbReference type="ChEBI" id="CHEBI:61717"/>
        <label>2</label>
    </ligand>
    <ligandPart>
        <name>Fe</name>
        <dbReference type="ChEBI" id="CHEBI:18248"/>
    </ligandPart>
</feature>
<feature type="binding site" description="covalent" evidence="1">
    <location>
        <position position="264"/>
    </location>
    <ligand>
        <name>heme c</name>
        <dbReference type="ChEBI" id="CHEBI:61717"/>
        <label>3</label>
    </ligand>
</feature>
<feature type="binding site" description="covalent" evidence="1">
    <location>
        <position position="267"/>
    </location>
    <ligand>
        <name>heme c</name>
        <dbReference type="ChEBI" id="CHEBI:61717"/>
        <label>3</label>
    </ligand>
</feature>
<feature type="binding site" description="axial binding residue" evidence="1">
    <location>
        <position position="268"/>
    </location>
    <ligand>
        <name>heme c</name>
        <dbReference type="ChEBI" id="CHEBI:61717"/>
        <label>3</label>
    </ligand>
    <ligandPart>
        <name>Fe</name>
        <dbReference type="ChEBI" id="CHEBI:18248"/>
    </ligandPart>
</feature>
<feature type="binding site" evidence="1">
    <location>
        <position position="270"/>
    </location>
    <ligand>
        <name>Ca(2+)</name>
        <dbReference type="ChEBI" id="CHEBI:29108"/>
    </ligand>
</feature>
<feature type="binding site" evidence="1">
    <location>
        <position position="271"/>
    </location>
    <ligand>
        <name>Ca(2+)</name>
        <dbReference type="ChEBI" id="CHEBI:29108"/>
    </ligand>
</feature>
<feature type="binding site" evidence="1">
    <location>
        <position position="271"/>
    </location>
    <ligand>
        <name>substrate</name>
    </ligand>
</feature>
<feature type="binding site" evidence="1">
    <location>
        <position position="316"/>
    </location>
    <ligand>
        <name>Ca(2+)</name>
        <dbReference type="ChEBI" id="CHEBI:29108"/>
    </ligand>
</feature>
<feature type="binding site" evidence="1">
    <location>
        <position position="318"/>
    </location>
    <ligand>
        <name>Ca(2+)</name>
        <dbReference type="ChEBI" id="CHEBI:29108"/>
    </ligand>
</feature>
<feature type="binding site" evidence="1">
    <location>
        <position position="319"/>
    </location>
    <ligand>
        <name>substrate</name>
    </ligand>
</feature>
<feature type="binding site" description="axial binding residue" evidence="1">
    <location>
        <position position="330"/>
    </location>
    <ligand>
        <name>heme c</name>
        <dbReference type="ChEBI" id="CHEBI:61717"/>
        <label>5</label>
    </ligand>
    <ligandPart>
        <name>Fe</name>
        <dbReference type="ChEBI" id="CHEBI:18248"/>
    </ligandPart>
</feature>
<feature type="binding site" description="covalent" evidence="1">
    <location>
        <position position="337"/>
    </location>
    <ligand>
        <name>heme c</name>
        <dbReference type="ChEBI" id="CHEBI:61717"/>
        <label>4</label>
    </ligand>
</feature>
<feature type="binding site" description="covalent" evidence="1">
    <location>
        <position position="340"/>
    </location>
    <ligand>
        <name>heme c</name>
        <dbReference type="ChEBI" id="CHEBI:61717"/>
        <label>4</label>
    </ligand>
</feature>
<feature type="binding site" description="axial binding residue" evidence="1">
    <location>
        <position position="341"/>
    </location>
    <ligand>
        <name>heme c</name>
        <dbReference type="ChEBI" id="CHEBI:61717"/>
        <label>4</label>
    </ligand>
    <ligandPart>
        <name>Fe</name>
        <dbReference type="ChEBI" id="CHEBI:18248"/>
    </ligandPart>
</feature>
<feature type="binding site" description="axial binding residue" evidence="1">
    <location>
        <position position="356"/>
    </location>
    <ligand>
        <name>heme c</name>
        <dbReference type="ChEBI" id="CHEBI:61717"/>
        <label>2</label>
    </ligand>
    <ligandPart>
        <name>Fe</name>
        <dbReference type="ChEBI" id="CHEBI:18248"/>
    </ligandPart>
</feature>
<feature type="binding site" description="covalent" evidence="1">
    <location>
        <position position="369"/>
    </location>
    <ligand>
        <name>heme c</name>
        <dbReference type="ChEBI" id="CHEBI:61717"/>
        <label>5</label>
    </ligand>
</feature>
<feature type="binding site" description="covalent" evidence="1">
    <location>
        <position position="372"/>
    </location>
    <ligand>
        <name>heme c</name>
        <dbReference type="ChEBI" id="CHEBI:61717"/>
        <label>5</label>
    </ligand>
</feature>
<feature type="binding site" description="axial binding residue" evidence="1">
    <location>
        <position position="373"/>
    </location>
    <ligand>
        <name>heme c</name>
        <dbReference type="ChEBI" id="CHEBI:61717"/>
        <label>5</label>
    </ligand>
    <ligandPart>
        <name>Fe</name>
        <dbReference type="ChEBI" id="CHEBI:18248"/>
    </ligandPart>
</feature>
<feature type="binding site" description="axial binding residue" evidence="1">
    <location>
        <position position="448"/>
    </location>
    <ligand>
        <name>heme c</name>
        <dbReference type="ChEBI" id="CHEBI:61717"/>
        <label>4</label>
    </ligand>
    <ligandPart>
        <name>Fe</name>
        <dbReference type="ChEBI" id="CHEBI:18248"/>
    </ligandPart>
</feature>
<comment type="function">
    <text evidence="1">Catalyzes the reduction of nitrite to ammonia, consuming six electrons in the process.</text>
</comment>
<comment type="catalytic activity">
    <reaction evidence="1">
        <text>6 Fe(III)-[cytochrome c] + NH4(+) + 2 H2O = 6 Fe(II)-[cytochrome c] + nitrite + 8 H(+)</text>
        <dbReference type="Rhea" id="RHEA:13089"/>
        <dbReference type="Rhea" id="RHEA-COMP:10350"/>
        <dbReference type="Rhea" id="RHEA-COMP:14399"/>
        <dbReference type="ChEBI" id="CHEBI:15377"/>
        <dbReference type="ChEBI" id="CHEBI:15378"/>
        <dbReference type="ChEBI" id="CHEBI:16301"/>
        <dbReference type="ChEBI" id="CHEBI:28938"/>
        <dbReference type="ChEBI" id="CHEBI:29033"/>
        <dbReference type="ChEBI" id="CHEBI:29034"/>
        <dbReference type="EC" id="1.7.2.2"/>
    </reaction>
</comment>
<comment type="cofactor">
    <cofactor evidence="1">
        <name>Ca(2+)</name>
        <dbReference type="ChEBI" id="CHEBI:29108"/>
    </cofactor>
    <text evidence="1">Binds 1 Ca(2+) ion per monomer.</text>
</comment>
<comment type="cofactor">
    <cofactor evidence="1">
        <name>heme c</name>
        <dbReference type="ChEBI" id="CHEBI:61717"/>
    </cofactor>
    <text evidence="1">Binds 5 heme c groups covalently per monomer.</text>
</comment>
<comment type="pathway">
    <text evidence="1">Nitrogen metabolism; nitrate reduction (assimilation).</text>
</comment>
<comment type="subcellular location">
    <subcellularLocation>
        <location evidence="1">Periplasm</location>
    </subcellularLocation>
</comment>
<comment type="similarity">
    <text evidence="1">Belongs to the cytochrome c-552 family.</text>
</comment>
<keyword id="KW-0106">Calcium</keyword>
<keyword id="KW-0249">Electron transport</keyword>
<keyword id="KW-0349">Heme</keyword>
<keyword id="KW-0408">Iron</keyword>
<keyword id="KW-0479">Metal-binding</keyword>
<keyword id="KW-0560">Oxidoreductase</keyword>
<keyword id="KW-0574">Periplasm</keyword>
<keyword id="KW-1185">Reference proteome</keyword>
<keyword id="KW-0732">Signal</keyword>
<keyword id="KW-0813">Transport</keyword>